<accession>A1WV88</accession>
<feature type="chain" id="PRO_1000026550" description="Phosphatidylserine decarboxylase beta chain" evidence="1">
    <location>
        <begin position="1"/>
        <end position="253"/>
    </location>
</feature>
<feature type="chain" id="PRO_1000026551" description="Phosphatidylserine decarboxylase alpha chain" evidence="1">
    <location>
        <begin position="254"/>
        <end position="292"/>
    </location>
</feature>
<feature type="active site" description="Charge relay system; for autoendoproteolytic cleavage activity" evidence="1">
    <location>
        <position position="98"/>
    </location>
</feature>
<feature type="active site" description="Charge relay system; for autoendoproteolytic cleavage activity" evidence="1">
    <location>
        <position position="153"/>
    </location>
</feature>
<feature type="active site" description="Charge relay system; for autoendoproteolytic cleavage activity" evidence="1">
    <location>
        <position position="254"/>
    </location>
</feature>
<feature type="active site" description="Schiff-base intermediate with substrate; via pyruvic acid; for decarboxylase activity" evidence="1">
    <location>
        <position position="254"/>
    </location>
</feature>
<feature type="site" description="Cleavage (non-hydrolytic); by autocatalysis" evidence="1">
    <location>
        <begin position="253"/>
        <end position="254"/>
    </location>
</feature>
<feature type="modified residue" description="Pyruvic acid (Ser); by autocatalysis" evidence="1">
    <location>
        <position position="254"/>
    </location>
</feature>
<comment type="function">
    <text evidence="1">Catalyzes the formation of phosphatidylethanolamine (PtdEtn) from phosphatidylserine (PtdSer).</text>
</comment>
<comment type="catalytic activity">
    <reaction evidence="1">
        <text>a 1,2-diacyl-sn-glycero-3-phospho-L-serine + H(+) = a 1,2-diacyl-sn-glycero-3-phosphoethanolamine + CO2</text>
        <dbReference type="Rhea" id="RHEA:20828"/>
        <dbReference type="ChEBI" id="CHEBI:15378"/>
        <dbReference type="ChEBI" id="CHEBI:16526"/>
        <dbReference type="ChEBI" id="CHEBI:57262"/>
        <dbReference type="ChEBI" id="CHEBI:64612"/>
        <dbReference type="EC" id="4.1.1.65"/>
    </reaction>
</comment>
<comment type="cofactor">
    <cofactor evidence="1">
        <name>pyruvate</name>
        <dbReference type="ChEBI" id="CHEBI:15361"/>
    </cofactor>
    <text evidence="1">Binds 1 pyruvoyl group covalently per subunit.</text>
</comment>
<comment type="pathway">
    <text evidence="1">Phospholipid metabolism; phosphatidylethanolamine biosynthesis; phosphatidylethanolamine from CDP-diacylglycerol: step 2/2.</text>
</comment>
<comment type="subunit">
    <text evidence="1">Heterodimer of a large membrane-associated beta subunit and a small pyruvoyl-containing alpha subunit.</text>
</comment>
<comment type="subcellular location">
    <subcellularLocation>
        <location evidence="1">Cell membrane</location>
        <topology evidence="1">Peripheral membrane protein</topology>
    </subcellularLocation>
</comment>
<comment type="PTM">
    <text evidence="1">Is synthesized initially as an inactive proenzyme. Formation of the active enzyme involves a self-maturation process in which the active site pyruvoyl group is generated from an internal serine residue via an autocatalytic post-translational modification. Two non-identical subunits are generated from the proenzyme in this reaction, and the pyruvate is formed at the N-terminus of the alpha chain, which is derived from the carboxyl end of the proenzyme. The autoendoproteolytic cleavage occurs by a canonical serine protease mechanism, in which the side chain hydroxyl group of the serine supplies its oxygen atom to form the C-terminus of the beta chain, while the remainder of the serine residue undergoes an oxidative deamination to produce ammonia and the pyruvoyl prosthetic group on the alpha chain. During this reaction, the Ser that is part of the protease active site of the proenzyme becomes the pyruvoyl prosthetic group, which constitutes an essential element of the active site of the mature decarboxylase.</text>
</comment>
<comment type="similarity">
    <text evidence="1">Belongs to the phosphatidylserine decarboxylase family. PSD-B subfamily. Prokaryotic type I sub-subfamily.</text>
</comment>
<dbReference type="EC" id="4.1.1.65" evidence="1"/>
<dbReference type="EMBL" id="CP000544">
    <property type="protein sequence ID" value="ABM61600.1"/>
    <property type="molecule type" value="Genomic_DNA"/>
</dbReference>
<dbReference type="RefSeq" id="WP_011813623.1">
    <property type="nucleotide sequence ID" value="NC_008789.1"/>
</dbReference>
<dbReference type="SMR" id="A1WV88"/>
<dbReference type="STRING" id="349124.Hhal_0824"/>
<dbReference type="KEGG" id="hha:Hhal_0824"/>
<dbReference type="eggNOG" id="COG0688">
    <property type="taxonomic scope" value="Bacteria"/>
</dbReference>
<dbReference type="HOGENOM" id="CLU_029061_4_1_6"/>
<dbReference type="OrthoDB" id="9802030at2"/>
<dbReference type="UniPathway" id="UPA00558">
    <property type="reaction ID" value="UER00616"/>
</dbReference>
<dbReference type="Proteomes" id="UP000000647">
    <property type="component" value="Chromosome"/>
</dbReference>
<dbReference type="GO" id="GO:0005886">
    <property type="term" value="C:plasma membrane"/>
    <property type="evidence" value="ECO:0007669"/>
    <property type="project" value="UniProtKB-SubCell"/>
</dbReference>
<dbReference type="GO" id="GO:0004609">
    <property type="term" value="F:phosphatidylserine decarboxylase activity"/>
    <property type="evidence" value="ECO:0007669"/>
    <property type="project" value="UniProtKB-UniRule"/>
</dbReference>
<dbReference type="GO" id="GO:0006646">
    <property type="term" value="P:phosphatidylethanolamine biosynthetic process"/>
    <property type="evidence" value="ECO:0007669"/>
    <property type="project" value="UniProtKB-UniRule"/>
</dbReference>
<dbReference type="HAMAP" id="MF_00662">
    <property type="entry name" value="PS_decarb_PSD_B_type1"/>
    <property type="match status" value="1"/>
</dbReference>
<dbReference type="InterPro" id="IPR003817">
    <property type="entry name" value="PS_Dcarbxylase"/>
</dbReference>
<dbReference type="InterPro" id="IPR033177">
    <property type="entry name" value="PSD-B"/>
</dbReference>
<dbReference type="InterPro" id="IPR033178">
    <property type="entry name" value="PSD_type1_pro"/>
</dbReference>
<dbReference type="NCBIfam" id="TIGR00163">
    <property type="entry name" value="PS_decarb"/>
    <property type="match status" value="1"/>
</dbReference>
<dbReference type="PANTHER" id="PTHR10067">
    <property type="entry name" value="PHOSPHATIDYLSERINE DECARBOXYLASE"/>
    <property type="match status" value="1"/>
</dbReference>
<dbReference type="PANTHER" id="PTHR10067:SF6">
    <property type="entry name" value="PHOSPHATIDYLSERINE DECARBOXYLASE PROENZYME, MITOCHONDRIAL"/>
    <property type="match status" value="1"/>
</dbReference>
<dbReference type="Pfam" id="PF02666">
    <property type="entry name" value="PS_Dcarbxylase"/>
    <property type="match status" value="1"/>
</dbReference>
<gene>
    <name evidence="1" type="primary">psd</name>
    <name type="ordered locus">Hhal_0824</name>
</gene>
<keyword id="KW-1003">Cell membrane</keyword>
<keyword id="KW-0210">Decarboxylase</keyword>
<keyword id="KW-0444">Lipid biosynthesis</keyword>
<keyword id="KW-0443">Lipid metabolism</keyword>
<keyword id="KW-0456">Lyase</keyword>
<keyword id="KW-0472">Membrane</keyword>
<keyword id="KW-0594">Phospholipid biosynthesis</keyword>
<keyword id="KW-1208">Phospholipid metabolism</keyword>
<keyword id="KW-0670">Pyruvate</keyword>
<keyword id="KW-1185">Reference proteome</keyword>
<keyword id="KW-0865">Zymogen</keyword>
<name>PSD_HALHL</name>
<sequence length="292" mass="31929">MNTESAASTADRLRAAVHWLLPTRLLSRLTWHVARSPRPWLKNRLNRFLVRRYGLDLSEAEHSDPTAYPTFYALFTRALRPGARPLPEDPQALISPCDGTVSAVGHLHGERLIQAKGIEYSLRGLLHGLDPAPFRDGAFVTIYLSPRDYHRFHAPVAGRLQAERHVPGRLLTVAPSAVRAIRGLFLRNERHVTLWETVVGLVAVVPVGAVNVGSIETVWGGPVGEAPGLSRDFGPGEGVFLGRGEELGRFNLGSTVVVVLPAGVVRWADGLVAGRPVRMGEVLGRLRRADAR</sequence>
<reference key="1">
    <citation type="submission" date="2006-12" db="EMBL/GenBank/DDBJ databases">
        <title>Complete sequence of Halorhodospira halophila SL1.</title>
        <authorList>
            <consortium name="US DOE Joint Genome Institute"/>
            <person name="Copeland A."/>
            <person name="Lucas S."/>
            <person name="Lapidus A."/>
            <person name="Barry K."/>
            <person name="Detter J.C."/>
            <person name="Glavina del Rio T."/>
            <person name="Hammon N."/>
            <person name="Israni S."/>
            <person name="Dalin E."/>
            <person name="Tice H."/>
            <person name="Pitluck S."/>
            <person name="Saunders E."/>
            <person name="Brettin T."/>
            <person name="Bruce D."/>
            <person name="Han C."/>
            <person name="Tapia R."/>
            <person name="Schmutz J."/>
            <person name="Larimer F."/>
            <person name="Land M."/>
            <person name="Hauser L."/>
            <person name="Kyrpides N."/>
            <person name="Mikhailova N."/>
            <person name="Hoff W."/>
            <person name="Richardson P."/>
        </authorList>
    </citation>
    <scope>NUCLEOTIDE SEQUENCE [LARGE SCALE GENOMIC DNA]</scope>
    <source>
        <strain>DSM 244 / SL1</strain>
    </source>
</reference>
<protein>
    <recommendedName>
        <fullName evidence="1">Phosphatidylserine decarboxylase proenzyme</fullName>
        <ecNumber evidence="1">4.1.1.65</ecNumber>
    </recommendedName>
    <component>
        <recommendedName>
            <fullName evidence="1">Phosphatidylserine decarboxylase alpha chain</fullName>
        </recommendedName>
    </component>
    <component>
        <recommendedName>
            <fullName evidence="1">Phosphatidylserine decarboxylase beta chain</fullName>
        </recommendedName>
    </component>
</protein>
<proteinExistence type="inferred from homology"/>
<evidence type="ECO:0000255" key="1">
    <source>
        <dbReference type="HAMAP-Rule" id="MF_00662"/>
    </source>
</evidence>
<organism>
    <name type="scientific">Halorhodospira halophila (strain DSM 244 / SL1)</name>
    <name type="common">Ectothiorhodospira halophila (strain DSM 244 / SL1)</name>
    <dbReference type="NCBI Taxonomy" id="349124"/>
    <lineage>
        <taxon>Bacteria</taxon>
        <taxon>Pseudomonadati</taxon>
        <taxon>Pseudomonadota</taxon>
        <taxon>Gammaproteobacteria</taxon>
        <taxon>Chromatiales</taxon>
        <taxon>Ectothiorhodospiraceae</taxon>
        <taxon>Halorhodospira</taxon>
    </lineage>
</organism>